<accession>B0S9V0</accession>
<feature type="chain" id="PRO_1000122798" description="UDP-3-O-acyl-N-acetylglucosamine deacetylase">
    <location>
        <begin position="1"/>
        <end position="302"/>
    </location>
</feature>
<feature type="active site" description="Proton donor" evidence="1">
    <location>
        <position position="265"/>
    </location>
</feature>
<feature type="binding site" evidence="1">
    <location>
        <position position="82"/>
    </location>
    <ligand>
        <name>Zn(2+)</name>
        <dbReference type="ChEBI" id="CHEBI:29105"/>
    </ligand>
</feature>
<feature type="binding site" evidence="1">
    <location>
        <position position="238"/>
    </location>
    <ligand>
        <name>Zn(2+)</name>
        <dbReference type="ChEBI" id="CHEBI:29105"/>
    </ligand>
</feature>
<feature type="binding site" evidence="1">
    <location>
        <position position="242"/>
    </location>
    <ligand>
        <name>Zn(2+)</name>
        <dbReference type="ChEBI" id="CHEBI:29105"/>
    </ligand>
</feature>
<reference key="1">
    <citation type="journal article" date="2008" name="PLoS ONE">
        <title>Genome sequence of the saprophyte Leptospira biflexa provides insights into the evolution of Leptospira and the pathogenesis of leptospirosis.</title>
        <authorList>
            <person name="Picardeau M."/>
            <person name="Bulach D.M."/>
            <person name="Bouchier C."/>
            <person name="Zuerner R.L."/>
            <person name="Zidane N."/>
            <person name="Wilson P.J."/>
            <person name="Creno S."/>
            <person name="Kuczek E.S."/>
            <person name="Bommezzadri S."/>
            <person name="Davis J.C."/>
            <person name="McGrath A."/>
            <person name="Johnson M.J."/>
            <person name="Boursaux-Eude C."/>
            <person name="Seemann T."/>
            <person name="Rouy Z."/>
            <person name="Coppel R.L."/>
            <person name="Rood J.I."/>
            <person name="Lajus A."/>
            <person name="Davies J.K."/>
            <person name="Medigue C."/>
            <person name="Adler B."/>
        </authorList>
    </citation>
    <scope>NUCLEOTIDE SEQUENCE [LARGE SCALE GENOMIC DNA]</scope>
    <source>
        <strain>Patoc 1 / Ames</strain>
    </source>
</reference>
<protein>
    <recommendedName>
        <fullName evidence="1">UDP-3-O-acyl-N-acetylglucosamine deacetylase</fullName>
        <shortName evidence="1">UDP-3-O-acyl-GlcNAc deacetylase</shortName>
        <ecNumber evidence="1">3.5.1.108</ecNumber>
    </recommendedName>
    <alternativeName>
        <fullName evidence="1">UDP-3-O-[R-3-hydroxymyristoyl]-N-acetylglucosamine deacetylase</fullName>
    </alternativeName>
</protein>
<proteinExistence type="inferred from homology"/>
<dbReference type="EC" id="3.5.1.108" evidence="1"/>
<dbReference type="EMBL" id="CP000777">
    <property type="protein sequence ID" value="ABZ94320.1"/>
    <property type="molecule type" value="Genomic_DNA"/>
</dbReference>
<dbReference type="RefSeq" id="WP_012388850.1">
    <property type="nucleotide sequence ID" value="NC_010842.1"/>
</dbReference>
<dbReference type="SMR" id="B0S9V0"/>
<dbReference type="KEGG" id="lbf:LBF_1813"/>
<dbReference type="HOGENOM" id="CLU_046528_1_0_12"/>
<dbReference type="UniPathway" id="UPA00359">
    <property type="reaction ID" value="UER00478"/>
</dbReference>
<dbReference type="GO" id="GO:0016020">
    <property type="term" value="C:membrane"/>
    <property type="evidence" value="ECO:0007669"/>
    <property type="project" value="GOC"/>
</dbReference>
<dbReference type="GO" id="GO:0046872">
    <property type="term" value="F:metal ion binding"/>
    <property type="evidence" value="ECO:0007669"/>
    <property type="project" value="UniProtKB-KW"/>
</dbReference>
<dbReference type="GO" id="GO:0103117">
    <property type="term" value="F:UDP-3-O-acyl-N-acetylglucosamine deacetylase activity"/>
    <property type="evidence" value="ECO:0007669"/>
    <property type="project" value="UniProtKB-UniRule"/>
</dbReference>
<dbReference type="GO" id="GO:0009245">
    <property type="term" value="P:lipid A biosynthetic process"/>
    <property type="evidence" value="ECO:0007669"/>
    <property type="project" value="UniProtKB-UniRule"/>
</dbReference>
<dbReference type="Gene3D" id="3.30.230.20">
    <property type="entry name" value="lpxc deacetylase, domain 1"/>
    <property type="match status" value="1"/>
</dbReference>
<dbReference type="Gene3D" id="3.30.1700.10">
    <property type="entry name" value="lpxc deacetylase, domain 2"/>
    <property type="match status" value="1"/>
</dbReference>
<dbReference type="HAMAP" id="MF_00388">
    <property type="entry name" value="LpxC"/>
    <property type="match status" value="1"/>
</dbReference>
<dbReference type="InterPro" id="IPR020568">
    <property type="entry name" value="Ribosomal_Su5_D2-typ_SF"/>
</dbReference>
<dbReference type="InterPro" id="IPR004463">
    <property type="entry name" value="UDP-acyl_GlcNac_deAcase"/>
</dbReference>
<dbReference type="InterPro" id="IPR011334">
    <property type="entry name" value="UDP-acyl_GlcNac_deAcase_C"/>
</dbReference>
<dbReference type="InterPro" id="IPR015870">
    <property type="entry name" value="UDP-acyl_N-AcGlcN_deAcase_N"/>
</dbReference>
<dbReference type="NCBIfam" id="TIGR00325">
    <property type="entry name" value="lpxC"/>
    <property type="match status" value="1"/>
</dbReference>
<dbReference type="PANTHER" id="PTHR33694">
    <property type="entry name" value="UDP-3-O-ACYL-N-ACETYLGLUCOSAMINE DEACETYLASE 1, MITOCHONDRIAL-RELATED"/>
    <property type="match status" value="1"/>
</dbReference>
<dbReference type="PANTHER" id="PTHR33694:SF1">
    <property type="entry name" value="UDP-3-O-ACYL-N-ACETYLGLUCOSAMINE DEACETYLASE 1, MITOCHONDRIAL-RELATED"/>
    <property type="match status" value="1"/>
</dbReference>
<dbReference type="Pfam" id="PF03331">
    <property type="entry name" value="LpxC"/>
    <property type="match status" value="1"/>
</dbReference>
<dbReference type="SUPFAM" id="SSF54211">
    <property type="entry name" value="Ribosomal protein S5 domain 2-like"/>
    <property type="match status" value="2"/>
</dbReference>
<evidence type="ECO:0000255" key="1">
    <source>
        <dbReference type="HAMAP-Rule" id="MF_00388"/>
    </source>
</evidence>
<sequence>MQTVIHRKTIQNSVTLKGIGVHSGKVVTLRLHPAEANTGLIFYLYKGIQKIRIPVSLDHVVDTSNATTIGDGSSNRVQTIEHLLAAVHTLGITDCIFEIDSVEVPIMDGSSLPFWEGIRSAGIRVLEETIEPITITNPIWVVDGDKYLVMLPSDELKVTYSIDFNHPLLRGQSYTTTLDESILGTDILPARTFGFLKDVEALQARGLAMGGSLDNAVVLTDDGYLNDHLRYDNECVRHKILDLVGDLAVMGRPFRGHLIASKAGHALDISLAKCIMSQVTGNELTQYKSKRIPLFSKKEAAK</sequence>
<organism>
    <name type="scientific">Leptospira biflexa serovar Patoc (strain Patoc 1 / Ames)</name>
    <dbReference type="NCBI Taxonomy" id="355278"/>
    <lineage>
        <taxon>Bacteria</taxon>
        <taxon>Pseudomonadati</taxon>
        <taxon>Spirochaetota</taxon>
        <taxon>Spirochaetia</taxon>
        <taxon>Leptospirales</taxon>
        <taxon>Leptospiraceae</taxon>
        <taxon>Leptospira</taxon>
    </lineage>
</organism>
<name>LPXC_LEPBA</name>
<keyword id="KW-0378">Hydrolase</keyword>
<keyword id="KW-0441">Lipid A biosynthesis</keyword>
<keyword id="KW-0444">Lipid biosynthesis</keyword>
<keyword id="KW-0443">Lipid metabolism</keyword>
<keyword id="KW-0479">Metal-binding</keyword>
<keyword id="KW-0862">Zinc</keyword>
<comment type="function">
    <text evidence="1">Catalyzes the hydrolysis of UDP-3-O-myristoyl-N-acetylglucosamine to form UDP-3-O-myristoylglucosamine and acetate, the committed step in lipid A biosynthesis.</text>
</comment>
<comment type="catalytic activity">
    <reaction evidence="1">
        <text>a UDP-3-O-[(3R)-3-hydroxyacyl]-N-acetyl-alpha-D-glucosamine + H2O = a UDP-3-O-[(3R)-3-hydroxyacyl]-alpha-D-glucosamine + acetate</text>
        <dbReference type="Rhea" id="RHEA:67816"/>
        <dbReference type="ChEBI" id="CHEBI:15377"/>
        <dbReference type="ChEBI" id="CHEBI:30089"/>
        <dbReference type="ChEBI" id="CHEBI:137740"/>
        <dbReference type="ChEBI" id="CHEBI:173225"/>
        <dbReference type="EC" id="3.5.1.108"/>
    </reaction>
</comment>
<comment type="cofactor">
    <cofactor evidence="1">
        <name>Zn(2+)</name>
        <dbReference type="ChEBI" id="CHEBI:29105"/>
    </cofactor>
</comment>
<comment type="pathway">
    <text evidence="1">Glycolipid biosynthesis; lipid IV(A) biosynthesis; lipid IV(A) from (3R)-3-hydroxytetradecanoyl-[acyl-carrier-protein] and UDP-N-acetyl-alpha-D-glucosamine: step 2/6.</text>
</comment>
<comment type="similarity">
    <text evidence="1">Belongs to the LpxC family.</text>
</comment>
<gene>
    <name evidence="1" type="primary">lpxC</name>
    <name type="ordered locus">LBF_1813</name>
</gene>